<comment type="function">
    <text evidence="2">Polysaccharide lyase that catalyzes the depolymerization of several anionic polysaccharides via a beta-elimination mechanism. Exhibits broad substrate specificity, catalyzing the degradation of not only alginate and poly-beta-D-mannuronate (poly-ManA), but poly-beta-D-glucuronate (poly-GlcA or poly-GlcUA) and hyaluronate (HA) as well. The oligosaccharide products formed by enzymatic cleavage are comprised mainly of disaccharides, with a lower abundance of trimers and pentamers. Is not active on poly-D-galacturonate, heparin and heparin sulfate.</text>
</comment>
<comment type="catalytic activity">
    <reaction evidence="2">
        <text>Eliminative cleavage of alginate to give oligosaccharides with 4-deoxy-alpha-L-erythro-hex-4-enuronosyl groups at their non-reducing ends and beta-D-mannuronate at their reducing end.</text>
        <dbReference type="EC" id="4.2.2.3"/>
    </reaction>
</comment>
<comment type="catalytic activity">
    <reaction evidence="2">
        <text>[hyaluronan](n) = n 3-(4-deoxy-beta-D-gluc-4-enuronosyl)-N-acetyl-D-glucosamine + H2O</text>
        <dbReference type="Rhea" id="RHEA:50240"/>
        <dbReference type="Rhea" id="RHEA-COMP:12583"/>
        <dbReference type="ChEBI" id="CHEBI:15377"/>
        <dbReference type="ChEBI" id="CHEBI:132151"/>
        <dbReference type="ChEBI" id="CHEBI:132153"/>
        <dbReference type="EC" id="4.2.2.1"/>
    </reaction>
</comment>
<comment type="catalytic activity">
    <reaction evidence="2">
        <text>Eliminative cleavage of (1-&gt;4)-beta-D-glucuronans to give oligosaccharides with 4-deoxy-beta-D-gluc-4-enuronosyl groups at their non-reducing ends. Complete degradation of glucuronans results in the formation of tetrasaccharides.</text>
        <dbReference type="EC" id="4.2.2.14"/>
    </reaction>
</comment>
<comment type="activity regulation">
    <text evidence="2">Is inhibited by mono- and divalent cations as well as L-ascorbic acid 6-hexadecanoate.</text>
</comment>
<comment type="biophysicochemical properties">
    <kinetics>
        <KM evidence="2">0.14 mg/ml for poly-GlcA</KM>
        <KM evidence="2">0.26 mg/ml for poly-ManA</KM>
        <KM evidence="2">0.55 mg/ml for hyaluronan</KM>
        <KM evidence="3">0.17 mM for poly-GlcA (at pH 7)</KM>
        <KM evidence="3">0.35 mM for poly-ManA (at pH 9)</KM>
        <text evidence="2 3">Vmax for poly-GlcA is about 10-fold greater versus poly-ManA or HA (PubMed:24257754). kcat is 31.9 sec(-1) with poly-GlcA as substrate (at pH 7) (PubMed:24808176). kcat is 3.3 sec(-1) with poly-ManA as substrate (at pH 9) (PubMed:24808176).</text>
    </kinetics>
    <phDependence>
        <text evidence="2">Optimum pH for enzymatic activity is substrate-dependent, with optimal hyaluronate degradation at pH 5, poly-beta-D-glucuronate degradation at pH 7, and alginate degradation at pH 9.</text>
    </phDependence>
</comment>
<comment type="subcellular location">
    <subcellularLocation>
        <location evidence="2">Cell outer membrane</location>
        <topology evidence="1 2">Lipid-anchor</topology>
    </subcellularLocation>
</comment>
<comment type="similarity">
    <text evidence="6">Belongs to the polysaccharide lyase 5 family.</text>
</comment>
<feature type="signal peptide" evidence="6">
    <location>
        <begin position="1"/>
        <end position="22"/>
    </location>
</feature>
<feature type="chain" id="PRO_5000341778" description="Polysaccharide lyase">
    <location>
        <begin position="23"/>
        <end position="331"/>
    </location>
</feature>
<feature type="lipid moiety-binding region" description="N-palmitoyl cysteine" evidence="6">
    <location>
        <position position="23"/>
    </location>
</feature>
<feature type="lipid moiety-binding region" description="S-diacylglycerol cysteine" evidence="6">
    <location>
        <position position="23"/>
    </location>
</feature>
<feature type="mutagenesis site" description="Impairs subcellular location since the protein mutant is completely retained in the cytosol. Loss of extracellular lyase activity in mutant cells." evidence="2">
    <original>C</original>
    <variation>F</variation>
    <location>
        <position position="23"/>
    </location>
</feature>
<feature type="mutagenesis site" description="Less than 0.5% of wild-type activity against all substrates." evidence="2">
    <original>N</original>
    <variation>L</variation>
    <location>
        <position position="167"/>
    </location>
</feature>
<feature type="mutagenesis site" description="Retains 10% of activity toward poly-GlcA, but shows less than 0.5% of wild-type activity against poly-ManA and HA." evidence="2">
    <original>H</original>
    <variation>A</variation>
    <location>
        <position position="168"/>
    </location>
</feature>
<feature type="mutagenesis site" description="Displays nearly eliminated HA activity, while increasing poly-ManA and poly-GlcA activity by at least 35%." evidence="3">
    <original>W</original>
    <variation>A</variation>
    <location>
        <position position="171"/>
    </location>
</feature>
<feature type="mutagenesis site" description="Less than 0.5% of wild-type activity against all substrates." evidence="2">
    <original>R</original>
    <variation>L</variation>
    <location>
        <position position="215"/>
    </location>
</feature>
<feature type="mutagenesis site" description="Increases activity and specificity toward poly-ManA." evidence="3">
    <original>H</original>
    <variation>F</variation>
    <location>
        <position position="221"/>
    </location>
</feature>
<feature type="mutagenesis site" description="Less than 0.5% of wild-type activity against all substrates." evidence="2">
    <original>Y</original>
    <variation>F</variation>
    <location>
        <position position="222"/>
    </location>
</feature>
<feature type="mutagenesis site" description="Increases activity and specificity toward poly-GlcA." evidence="3">
    <original>R</original>
    <variation>L</variation>
    <location>
        <position position="312"/>
    </location>
</feature>
<feature type="strand" evidence="10">
    <location>
        <begin position="31"/>
        <end position="33"/>
    </location>
</feature>
<feature type="helix" evidence="9">
    <location>
        <begin position="49"/>
        <end position="79"/>
    </location>
</feature>
<feature type="helix" evidence="9">
    <location>
        <begin position="82"/>
        <end position="97"/>
    </location>
</feature>
<feature type="turn" evidence="9">
    <location>
        <begin position="98"/>
        <end position="101"/>
    </location>
</feature>
<feature type="strand" evidence="10">
    <location>
        <begin position="103"/>
        <end position="105"/>
    </location>
</feature>
<feature type="strand" evidence="9">
    <location>
        <begin position="108"/>
        <end position="111"/>
    </location>
</feature>
<feature type="helix" evidence="9">
    <location>
        <begin position="112"/>
        <end position="131"/>
    </location>
</feature>
<feature type="helix" evidence="9">
    <location>
        <begin position="132"/>
        <end position="134"/>
    </location>
</feature>
<feature type="helix" evidence="9">
    <location>
        <begin position="137"/>
        <end position="158"/>
    </location>
</feature>
<feature type="helix" evidence="9">
    <location>
        <begin position="167"/>
        <end position="182"/>
    </location>
</feature>
<feature type="helix" evidence="9">
    <location>
        <begin position="186"/>
        <end position="202"/>
    </location>
</feature>
<feature type="turn" evidence="9">
    <location>
        <begin position="210"/>
        <end position="214"/>
    </location>
</feature>
<feature type="helix" evidence="9">
    <location>
        <begin position="216"/>
        <end position="218"/>
    </location>
</feature>
<feature type="helix" evidence="9">
    <location>
        <begin position="219"/>
        <end position="239"/>
    </location>
</feature>
<feature type="helix" evidence="8">
    <location>
        <begin position="244"/>
        <end position="246"/>
    </location>
</feature>
<feature type="helix" evidence="9">
    <location>
        <begin position="247"/>
        <end position="264"/>
    </location>
</feature>
<feature type="helix" evidence="9">
    <location>
        <begin position="267"/>
        <end position="273"/>
    </location>
</feature>
<feature type="helix" evidence="9">
    <location>
        <begin position="286"/>
        <end position="292"/>
    </location>
</feature>
<feature type="helix" evidence="9">
    <location>
        <begin position="295"/>
        <end position="297"/>
    </location>
</feature>
<feature type="helix" evidence="9">
    <location>
        <begin position="300"/>
        <end position="303"/>
    </location>
</feature>
<feature type="helix" evidence="9">
    <location>
        <begin position="311"/>
        <end position="313"/>
    </location>
</feature>
<feature type="helix" evidence="9">
    <location>
        <begin position="317"/>
        <end position="323"/>
    </location>
</feature>
<feature type="strand" evidence="9">
    <location>
        <begin position="325"/>
        <end position="328"/>
    </location>
</feature>
<keyword id="KW-0002">3D-structure</keyword>
<keyword id="KW-0119">Carbohydrate metabolism</keyword>
<keyword id="KW-0998">Cell outer membrane</keyword>
<keyword id="KW-0449">Lipoprotein</keyword>
<keyword id="KW-0456">Lyase</keyword>
<keyword id="KW-0472">Membrane</keyword>
<keyword id="KW-0564">Palmitate</keyword>
<keyword id="KW-0624">Polysaccharide degradation</keyword>
<keyword id="KW-1185">Reference proteome</keyword>
<keyword id="KW-0732">Signal</keyword>
<organism>
    <name type="scientific">Stenotrophomonas maltophilia (strain K279a)</name>
    <dbReference type="NCBI Taxonomy" id="522373"/>
    <lineage>
        <taxon>Bacteria</taxon>
        <taxon>Pseudomonadati</taxon>
        <taxon>Pseudomonadota</taxon>
        <taxon>Gammaproteobacteria</taxon>
        <taxon>Lysobacterales</taxon>
        <taxon>Lysobacteraceae</taxon>
        <taxon>Stenotrophomonas</taxon>
        <taxon>Stenotrophomonas maltophilia group</taxon>
    </lineage>
</organism>
<proteinExistence type="evidence at protein level"/>
<protein>
    <recommendedName>
        <fullName evidence="4">Polysaccharide lyase</fullName>
        <shortName evidence="4">PL</shortName>
        <ecNumber evidence="2">4.2.2.-</ecNumber>
    </recommendedName>
    <alternativeName>
        <fullName evidence="7">Alginate lyase</fullName>
        <ecNumber evidence="2">4.2.2.3</ecNumber>
    </alternativeName>
    <alternativeName>
        <fullName evidence="6">Endolytic polysaccharide lyase</fullName>
    </alternativeName>
    <alternativeName>
        <fullName evidence="7">Hyaluronate lyase</fullName>
        <ecNumber evidence="2">4.2.2.1</ecNumber>
    </alternativeName>
    <alternativeName>
        <fullName evidence="5">Multifunctional polysaccharide lyase</fullName>
    </alternativeName>
    <alternativeName>
        <fullName evidence="7">Poly-beta-D-glucuronate lyase</fullName>
        <ecNumber evidence="2">4.2.2.14</ecNumber>
    </alternativeName>
</protein>
<gene>
    <name type="ordered locus">Smlt1473</name>
</gene>
<sequence length="331" mass="36696">MSLPLRLALLPTLLASASAFAACPAPPPGQPDIRAIGYYTDKAGSVIDPALQQQNKDATAPLDRYAADVARMSDDYLRNGDPAAAQCTLSWLGAWADDGAMLGQMIRVNNDQSFYMRQWMLDAVAMAYLKVHDQANPQQRARIDPWLQKLARANLAYWDNPKRRRNNHYYWGGLGVLATGLATDDDALWQAGHAAFQKGIDDIQDDGSLPLEMARGQRALHYHDYALAPLVMMAELARLRGQDWYASRNHAIDRLARRVIEGSRDPAWFNQHTGAAQLPLQASGWVEFYRLRSPDGGVFDAAHARGPFHSPRLGGDLTLMATHGIVRTPLR</sequence>
<accession>B2FHL8</accession>
<evidence type="ECO:0000255" key="1">
    <source>
        <dbReference type="PROSITE-ProRule" id="PRU00303"/>
    </source>
</evidence>
<evidence type="ECO:0000269" key="2">
    <source>
    </source>
</evidence>
<evidence type="ECO:0000269" key="3">
    <source>
    </source>
</evidence>
<evidence type="ECO:0000303" key="4">
    <source>
    </source>
</evidence>
<evidence type="ECO:0000303" key="5">
    <source>
    </source>
</evidence>
<evidence type="ECO:0000305" key="6"/>
<evidence type="ECO:0000305" key="7">
    <source>
    </source>
</evidence>
<evidence type="ECO:0007829" key="8">
    <source>
        <dbReference type="PDB" id="7FHU"/>
    </source>
</evidence>
<evidence type="ECO:0007829" key="9">
    <source>
        <dbReference type="PDB" id="7FHW"/>
    </source>
</evidence>
<evidence type="ECO:0007829" key="10">
    <source>
        <dbReference type="PDB" id="7FHZ"/>
    </source>
</evidence>
<name>PL_STRMK</name>
<reference key="1">
    <citation type="journal article" date="2008" name="Genome Biol.">
        <title>The complete genome, comparative and functional analysis of Stenotrophomonas maltophilia reveals an organism heavily shielded by drug resistance determinants.</title>
        <authorList>
            <person name="Crossman L.C."/>
            <person name="Gould V.C."/>
            <person name="Dow J.M."/>
            <person name="Vernikos G.S."/>
            <person name="Okazaki A."/>
            <person name="Sebaihia M."/>
            <person name="Saunders D."/>
            <person name="Arrowsmith C."/>
            <person name="Carver T."/>
            <person name="Peters N."/>
            <person name="Adlem E."/>
            <person name="Kerhornou A."/>
            <person name="Lord A."/>
            <person name="Murphy L."/>
            <person name="Seeger K."/>
            <person name="Squares R."/>
            <person name="Rutter S."/>
            <person name="Quail M.A."/>
            <person name="Rajandream M.A."/>
            <person name="Harris D."/>
            <person name="Churcher C."/>
            <person name="Bentley S.D."/>
            <person name="Parkhill J."/>
            <person name="Thomson N.R."/>
            <person name="Avison M.B."/>
        </authorList>
    </citation>
    <scope>NUCLEOTIDE SEQUENCE [LARGE SCALE GENOMIC DNA]</scope>
    <source>
        <strain>K279a</strain>
    </source>
</reference>
<reference key="2">
    <citation type="journal article" date="2014" name="J. Biol. Chem.">
        <title>A polysaccharide lyase from Stenotrophomonas maltophilia with a unique, pH-regulated substrate specificity.</title>
        <authorList>
            <person name="MacDonald L.C."/>
            <person name="Berger B.W."/>
        </authorList>
    </citation>
    <scope>FUNCTION</scope>
    <scope>CATALYTIC ACTIVITY</scope>
    <scope>SUBSTRATE SPECIFICITY</scope>
    <scope>BIOPHYSICOCHEMICAL PROPERTIES</scope>
    <scope>ACTIVITY REGULATION</scope>
    <scope>SUBCELLULAR LOCATION</scope>
    <scope>MUTAGENESIS OF CYS-23; ASN-167; HIS-168; ARG-215 AND TYR-222</scope>
    <source>
        <strain>K279a</strain>
    </source>
</reference>
<reference key="3">
    <citation type="journal article" date="2014" name="J. Biol. Chem.">
        <title>Insight into the role of substrate-binding residues in conferring substrate specificity for the multifunctional polysaccharide lyase Smlt1473.</title>
        <authorList>
            <person name="MacDonald L.C."/>
            <person name="Berger B.W."/>
        </authorList>
    </citation>
    <scope>3D-STRUCTURE MODELING</scope>
    <scope>BIOPHYSICOCHEMICAL PROPERTIES</scope>
    <scope>MUTAGENESIS OF TRP-171; HIS-221 AND ARG-312</scope>
    <source>
        <strain>K279a</strain>
    </source>
</reference>
<dbReference type="EC" id="4.2.2.-" evidence="2"/>
<dbReference type="EC" id="4.2.2.3" evidence="2"/>
<dbReference type="EC" id="4.2.2.1" evidence="2"/>
<dbReference type="EC" id="4.2.2.14" evidence="2"/>
<dbReference type="EMBL" id="AM743169">
    <property type="protein sequence ID" value="CAQ45011.1"/>
    <property type="molecule type" value="Genomic_DNA"/>
</dbReference>
<dbReference type="RefSeq" id="WP_012479599.1">
    <property type="nucleotide sequence ID" value="NC_010943.1"/>
</dbReference>
<dbReference type="PDB" id="7FHU">
    <property type="method" value="X-ray"/>
    <property type="resolution" value="2.43 A"/>
    <property type="chains" value="A/B=22-331"/>
</dbReference>
<dbReference type="PDB" id="7FHV">
    <property type="method" value="X-ray"/>
    <property type="resolution" value="2.28 A"/>
    <property type="chains" value="A/B=22-331"/>
</dbReference>
<dbReference type="PDB" id="7FHW">
    <property type="method" value="X-ray"/>
    <property type="resolution" value="2.06 A"/>
    <property type="chains" value="A/B=22-331"/>
</dbReference>
<dbReference type="PDB" id="7FHX">
    <property type="method" value="X-ray"/>
    <property type="resolution" value="2.63 A"/>
    <property type="chains" value="A/B=22-331"/>
</dbReference>
<dbReference type="PDB" id="7FHY">
    <property type="method" value="X-ray"/>
    <property type="resolution" value="2.20 A"/>
    <property type="chains" value="A/B=22-331"/>
</dbReference>
<dbReference type="PDB" id="7FHZ">
    <property type="method" value="X-ray"/>
    <property type="resolution" value="2.50 A"/>
    <property type="chains" value="A=22-330"/>
</dbReference>
<dbReference type="PDB" id="7FI0">
    <property type="method" value="X-ray"/>
    <property type="resolution" value="2.31 A"/>
    <property type="chains" value="A=22-331"/>
</dbReference>
<dbReference type="PDB" id="7FI1">
    <property type="method" value="X-ray"/>
    <property type="resolution" value="2.43 A"/>
    <property type="chains" value="A=22-331"/>
</dbReference>
<dbReference type="PDB" id="7FI2">
    <property type="method" value="X-ray"/>
    <property type="resolution" value="2.60 A"/>
    <property type="chains" value="A=22-331"/>
</dbReference>
<dbReference type="PDBsum" id="7FHU"/>
<dbReference type="PDBsum" id="7FHV"/>
<dbReference type="PDBsum" id="7FHW"/>
<dbReference type="PDBsum" id="7FHX"/>
<dbReference type="PDBsum" id="7FHY"/>
<dbReference type="PDBsum" id="7FHZ"/>
<dbReference type="PDBsum" id="7FI0"/>
<dbReference type="PDBsum" id="7FI1"/>
<dbReference type="PDBsum" id="7FI2"/>
<dbReference type="SMR" id="B2FHL8"/>
<dbReference type="CAZy" id="PL5">
    <property type="family name" value="Polysaccharide Lyase Family 5"/>
</dbReference>
<dbReference type="EnsemblBacteria" id="CAQ45011">
    <property type="protein sequence ID" value="CAQ45011"/>
    <property type="gene ID" value="Smlt1473"/>
</dbReference>
<dbReference type="KEGG" id="sml:Smlt1473"/>
<dbReference type="PATRIC" id="fig|522373.3.peg.1413"/>
<dbReference type="eggNOG" id="ENOG502ZAMJ">
    <property type="taxonomic scope" value="Bacteria"/>
</dbReference>
<dbReference type="HOGENOM" id="CLU_064286_0_0_6"/>
<dbReference type="Proteomes" id="UP000008840">
    <property type="component" value="Chromosome"/>
</dbReference>
<dbReference type="GO" id="GO:0009279">
    <property type="term" value="C:cell outer membrane"/>
    <property type="evidence" value="ECO:0007669"/>
    <property type="project" value="UniProtKB-SubCell"/>
</dbReference>
<dbReference type="GO" id="GO:0042597">
    <property type="term" value="C:periplasmic space"/>
    <property type="evidence" value="ECO:0007669"/>
    <property type="project" value="InterPro"/>
</dbReference>
<dbReference type="GO" id="GO:0033994">
    <property type="term" value="F:glucuronan lyase activity"/>
    <property type="evidence" value="ECO:0007669"/>
    <property type="project" value="UniProtKB-EC"/>
</dbReference>
<dbReference type="GO" id="GO:0030340">
    <property type="term" value="F:hyaluronate lyase activity"/>
    <property type="evidence" value="ECO:0007669"/>
    <property type="project" value="UniProtKB-EC"/>
</dbReference>
<dbReference type="GO" id="GO:0045135">
    <property type="term" value="F:poly(beta-D-mannuronate) lyase activity"/>
    <property type="evidence" value="ECO:0007669"/>
    <property type="project" value="UniProtKB-EC"/>
</dbReference>
<dbReference type="GO" id="GO:0000272">
    <property type="term" value="P:polysaccharide catabolic process"/>
    <property type="evidence" value="ECO:0007669"/>
    <property type="project" value="UniProtKB-KW"/>
</dbReference>
<dbReference type="Gene3D" id="1.50.10.100">
    <property type="entry name" value="Chondroitin AC/alginate lyase"/>
    <property type="match status" value="1"/>
</dbReference>
<dbReference type="InterPro" id="IPR008397">
    <property type="entry name" value="Alginate_lyase_dom"/>
</dbReference>
<dbReference type="InterPro" id="IPR008929">
    <property type="entry name" value="Chondroitin_lyas"/>
</dbReference>
<dbReference type="NCBIfam" id="NF001469">
    <property type="entry name" value="PRK00325.1-4"/>
    <property type="match status" value="1"/>
</dbReference>
<dbReference type="Pfam" id="PF05426">
    <property type="entry name" value="Alginate_lyase"/>
    <property type="match status" value="1"/>
</dbReference>
<dbReference type="SUPFAM" id="SSF48230">
    <property type="entry name" value="Chondroitin AC/alginate lyase"/>
    <property type="match status" value="1"/>
</dbReference>
<dbReference type="PROSITE" id="PS51257">
    <property type="entry name" value="PROKAR_LIPOPROTEIN"/>
    <property type="match status" value="1"/>
</dbReference>